<sequence length="60" mass="6537">MNFTKLFILVAIAVLVVVGVQPVDGAPRWKFGKRLEKLGRNVFRAAKKALPVIAGYKALG</sequence>
<keyword id="KW-0027">Amidation</keyword>
<keyword id="KW-0044">Antibiotic</keyword>
<keyword id="KW-0929">Antimicrobial</keyword>
<keyword id="KW-0391">Immunity</keyword>
<keyword id="KW-0399">Innate immunity</keyword>
<keyword id="KW-1185">Reference proteome</keyword>
<keyword id="KW-0964">Secreted</keyword>
<keyword id="KW-0732">Signal</keyword>
<organism>
    <name type="scientific">Anopheles gambiae</name>
    <name type="common">African malaria mosquito</name>
    <dbReference type="NCBI Taxonomy" id="7165"/>
    <lineage>
        <taxon>Eukaryota</taxon>
        <taxon>Metazoa</taxon>
        <taxon>Ecdysozoa</taxon>
        <taxon>Arthropoda</taxon>
        <taxon>Hexapoda</taxon>
        <taxon>Insecta</taxon>
        <taxon>Pterygota</taxon>
        <taxon>Neoptera</taxon>
        <taxon>Endopterygota</taxon>
        <taxon>Diptera</taxon>
        <taxon>Nematocera</taxon>
        <taxon>Culicoidea</taxon>
        <taxon>Culicidae</taxon>
        <taxon>Anophelinae</taxon>
        <taxon>Anopheles</taxon>
    </lineage>
</organism>
<proteinExistence type="inferred from homology"/>
<name>CECB_ANOGA</name>
<dbReference type="EMBL" id="AF525673">
    <property type="protein sequence ID" value="AAM82611.1"/>
    <property type="molecule type" value="Genomic_DNA"/>
</dbReference>
<dbReference type="EMBL" id="AAAB01008847">
    <property type="protein sequence ID" value="EAA06859.2"/>
    <property type="molecule type" value="Genomic_DNA"/>
</dbReference>
<dbReference type="SMR" id="Q8MUF4"/>
<dbReference type="FunCoup" id="Q8MUF4">
    <property type="interactions" value="106"/>
</dbReference>
<dbReference type="STRING" id="7165.Q8MUF4"/>
<dbReference type="PaxDb" id="7165-AGAP000694-PA"/>
<dbReference type="EnsemblMetazoa" id="AGAP000694-RA">
    <property type="protein sequence ID" value="AGAP000694-PA"/>
    <property type="gene ID" value="AGAP000694"/>
</dbReference>
<dbReference type="GeneID" id="1272282"/>
<dbReference type="KEGG" id="aga:1272282"/>
<dbReference type="VEuPathDB" id="VectorBase:AGAMI1_004154"/>
<dbReference type="VEuPathDB" id="VectorBase:AGAP000694"/>
<dbReference type="eggNOG" id="ENOG502T99E">
    <property type="taxonomic scope" value="Eukaryota"/>
</dbReference>
<dbReference type="HOGENOM" id="CLU_187909_1_1_1"/>
<dbReference type="InParanoid" id="Q8MUF4"/>
<dbReference type="OMA" id="APRWKFG"/>
<dbReference type="PhylomeDB" id="Q8MUF4"/>
<dbReference type="Proteomes" id="UP000007062">
    <property type="component" value="Chromosome X"/>
</dbReference>
<dbReference type="GO" id="GO:0005615">
    <property type="term" value="C:extracellular space"/>
    <property type="evidence" value="ECO:0000318"/>
    <property type="project" value="GO_Central"/>
</dbReference>
<dbReference type="GO" id="GO:0019731">
    <property type="term" value="P:antibacterial humoral response"/>
    <property type="evidence" value="ECO:0000318"/>
    <property type="project" value="GO_Central"/>
</dbReference>
<dbReference type="GO" id="GO:0050829">
    <property type="term" value="P:defense response to Gram-negative bacterium"/>
    <property type="evidence" value="ECO:0000318"/>
    <property type="project" value="GO_Central"/>
</dbReference>
<dbReference type="GO" id="GO:0050830">
    <property type="term" value="P:defense response to Gram-positive bacterium"/>
    <property type="evidence" value="ECO:0000318"/>
    <property type="project" value="GO_Central"/>
</dbReference>
<dbReference type="GO" id="GO:0045087">
    <property type="term" value="P:innate immune response"/>
    <property type="evidence" value="ECO:0007669"/>
    <property type="project" value="UniProtKB-KW"/>
</dbReference>
<dbReference type="InterPro" id="IPR000875">
    <property type="entry name" value="Cecropin"/>
</dbReference>
<dbReference type="InterPro" id="IPR020400">
    <property type="entry name" value="Cecropin_insect"/>
</dbReference>
<dbReference type="PANTHER" id="PTHR38329">
    <property type="entry name" value="CECROPIN-A1-RELATED"/>
    <property type="match status" value="1"/>
</dbReference>
<dbReference type="PANTHER" id="PTHR38329:SF1">
    <property type="entry name" value="CECROPIN-A1-RELATED"/>
    <property type="match status" value="1"/>
</dbReference>
<dbReference type="Pfam" id="PF00272">
    <property type="entry name" value="Cecropin"/>
    <property type="match status" value="1"/>
</dbReference>
<dbReference type="PROSITE" id="PS00268">
    <property type="entry name" value="CECROPIN"/>
    <property type="match status" value="1"/>
</dbReference>
<gene>
    <name type="primary">CecB</name>
    <name type="synonym">CEC3</name>
    <name type="ORF">AGAP000694</name>
</gene>
<accession>Q8MUF4</accession>
<accession>Q7QEE2</accession>
<feature type="signal peptide" evidence="2">
    <location>
        <begin position="1"/>
        <end position="25"/>
    </location>
</feature>
<feature type="chain" id="PRO_0000004822" description="Cecropin-B">
    <location>
        <begin position="26"/>
        <end position="59"/>
    </location>
</feature>
<feature type="modified residue" description="Leucine amide" evidence="2">
    <location>
        <position position="59"/>
    </location>
</feature>
<evidence type="ECO:0000250" key="1"/>
<evidence type="ECO:0000255" key="2"/>
<evidence type="ECO:0000305" key="3"/>
<comment type="function">
    <text evidence="1">Cecropins have lytic and antibacterial activity against several Gram-positive and Gram-negative bacteria.</text>
</comment>
<comment type="subcellular location">
    <subcellularLocation>
        <location evidence="1">Secreted</location>
    </subcellularLocation>
</comment>
<comment type="similarity">
    <text evidence="3">Belongs to the cecropin family.</text>
</comment>
<protein>
    <recommendedName>
        <fullName>Cecropin-B</fullName>
    </recommendedName>
</protein>
<reference key="1">
    <citation type="journal article" date="2002" name="Insect Mol. Biol.">
        <title>Genomic organization and regulation of three cecropin genes in Anopheles gambiae.</title>
        <authorList>
            <person name="Zheng X.-L."/>
            <person name="Zheng A.L."/>
        </authorList>
    </citation>
    <scope>NUCLEOTIDE SEQUENCE [GENOMIC DNA]</scope>
</reference>
<reference key="2">
    <citation type="journal article" date="2002" name="Science">
        <title>The genome sequence of the malaria mosquito Anopheles gambiae.</title>
        <authorList>
            <person name="Holt R.A."/>
            <person name="Subramanian G.M."/>
            <person name="Halpern A."/>
            <person name="Sutton G.G."/>
            <person name="Charlab R."/>
            <person name="Nusskern D.R."/>
            <person name="Wincker P."/>
            <person name="Clark A.G."/>
            <person name="Ribeiro J.M.C."/>
            <person name="Wides R."/>
            <person name="Salzberg S.L."/>
            <person name="Loftus B.J."/>
            <person name="Yandell M.D."/>
            <person name="Majoros W.H."/>
            <person name="Rusch D.B."/>
            <person name="Lai Z."/>
            <person name="Kraft C.L."/>
            <person name="Abril J.F."/>
            <person name="Anthouard V."/>
            <person name="Arensburger P."/>
            <person name="Atkinson P.W."/>
            <person name="Baden H."/>
            <person name="de Berardinis V."/>
            <person name="Baldwin D."/>
            <person name="Benes V."/>
            <person name="Biedler J."/>
            <person name="Blass C."/>
            <person name="Bolanos R."/>
            <person name="Boscus D."/>
            <person name="Barnstead M."/>
            <person name="Cai S."/>
            <person name="Center A."/>
            <person name="Chaturverdi K."/>
            <person name="Christophides G.K."/>
            <person name="Chrystal M.A.M."/>
            <person name="Clamp M."/>
            <person name="Cravchik A."/>
            <person name="Curwen V."/>
            <person name="Dana A."/>
            <person name="Delcher A."/>
            <person name="Dew I."/>
            <person name="Evans C.A."/>
            <person name="Flanigan M."/>
            <person name="Grundschober-Freimoser A."/>
            <person name="Friedli L."/>
            <person name="Gu Z."/>
            <person name="Guan P."/>
            <person name="Guigo R."/>
            <person name="Hillenmeyer M.E."/>
            <person name="Hladun S.L."/>
            <person name="Hogan J.R."/>
            <person name="Hong Y.S."/>
            <person name="Hoover J."/>
            <person name="Jaillon O."/>
            <person name="Ke Z."/>
            <person name="Kodira C.D."/>
            <person name="Kokoza E."/>
            <person name="Koutsos A."/>
            <person name="Letunic I."/>
            <person name="Levitsky A.A."/>
            <person name="Liang Y."/>
            <person name="Lin J.-J."/>
            <person name="Lobo N.F."/>
            <person name="Lopez J.R."/>
            <person name="Malek J.A."/>
            <person name="McIntosh T.C."/>
            <person name="Meister S."/>
            <person name="Miller J.R."/>
            <person name="Mobarry C."/>
            <person name="Mongin E."/>
            <person name="Murphy S.D."/>
            <person name="O'Brochta D.A."/>
            <person name="Pfannkoch C."/>
            <person name="Qi R."/>
            <person name="Regier M.A."/>
            <person name="Remington K."/>
            <person name="Shao H."/>
            <person name="Sharakhova M.V."/>
            <person name="Sitter C.D."/>
            <person name="Shetty J."/>
            <person name="Smith T.J."/>
            <person name="Strong R."/>
            <person name="Sun J."/>
            <person name="Thomasova D."/>
            <person name="Ton L.Q."/>
            <person name="Topalis P."/>
            <person name="Tu Z.J."/>
            <person name="Unger M.F."/>
            <person name="Walenz B."/>
            <person name="Wang A.H."/>
            <person name="Wang J."/>
            <person name="Wang M."/>
            <person name="Wang X."/>
            <person name="Woodford K.J."/>
            <person name="Wortman J.R."/>
            <person name="Wu M."/>
            <person name="Yao A."/>
            <person name="Zdobnov E.M."/>
            <person name="Zhang H."/>
            <person name="Zhao Q."/>
            <person name="Zhao S."/>
            <person name="Zhu S.C."/>
            <person name="Zhimulev I."/>
            <person name="Coluzzi M."/>
            <person name="della Torre A."/>
            <person name="Roth C.W."/>
            <person name="Louis C."/>
            <person name="Kalush F."/>
            <person name="Mural R.J."/>
            <person name="Myers E.W."/>
            <person name="Adams M.D."/>
            <person name="Smith H.O."/>
            <person name="Broder S."/>
            <person name="Gardner M.J."/>
            <person name="Fraser C.M."/>
            <person name="Birney E."/>
            <person name="Bork P."/>
            <person name="Brey P.T."/>
            <person name="Venter J.C."/>
            <person name="Weissenbach J."/>
            <person name="Kafatos F.C."/>
            <person name="Collins F.H."/>
            <person name="Hoffman S.L."/>
        </authorList>
    </citation>
    <scope>NUCLEOTIDE SEQUENCE [LARGE SCALE GENOMIC DNA]</scope>
    <source>
        <strain>PEST</strain>
    </source>
</reference>